<keyword id="KW-1003">Cell membrane</keyword>
<keyword id="KW-0472">Membrane</keyword>
<keyword id="KW-1185">Reference proteome</keyword>
<keyword id="KW-0812">Transmembrane</keyword>
<keyword id="KW-1133">Transmembrane helix</keyword>
<feature type="chain" id="PRO_0000210557" description="Uncharacterized protein MG350.1">
    <location>
        <begin position="1"/>
        <end position="224"/>
    </location>
</feature>
<feature type="transmembrane region" description="Helical" evidence="1">
    <location>
        <begin position="25"/>
        <end position="45"/>
    </location>
</feature>
<feature type="transmembrane region" description="Helical" evidence="1">
    <location>
        <begin position="54"/>
        <end position="74"/>
    </location>
</feature>
<feature type="transmembrane region" description="Helical" evidence="1">
    <location>
        <begin position="91"/>
        <end position="111"/>
    </location>
</feature>
<feature type="transmembrane region" description="Helical" evidence="1">
    <location>
        <begin position="119"/>
        <end position="139"/>
    </location>
</feature>
<feature type="transmembrane region" description="Helical" evidence="1">
    <location>
        <begin position="142"/>
        <end position="162"/>
    </location>
</feature>
<feature type="transmembrane region" description="Helical" evidence="1">
    <location>
        <begin position="174"/>
        <end position="194"/>
    </location>
</feature>
<reference key="1">
    <citation type="journal article" date="1995" name="Science">
        <title>The minimal gene complement of Mycoplasma genitalium.</title>
        <authorList>
            <person name="Fraser C.M."/>
            <person name="Gocayne J.D."/>
            <person name="White O."/>
            <person name="Adams M.D."/>
            <person name="Clayton R.A."/>
            <person name="Fleischmann R.D."/>
            <person name="Bult C.J."/>
            <person name="Kerlavage A.R."/>
            <person name="Sutton G.G."/>
            <person name="Kelley J.M."/>
            <person name="Fritchman J.L."/>
            <person name="Weidman J.F."/>
            <person name="Small K.V."/>
            <person name="Sandusky M."/>
            <person name="Fuhrmann J.L."/>
            <person name="Nguyen D.T."/>
            <person name="Utterback T.R."/>
            <person name="Saudek D.M."/>
            <person name="Phillips C.A."/>
            <person name="Merrick J.M."/>
            <person name="Tomb J.-F."/>
            <person name="Dougherty B.A."/>
            <person name="Bott K.F."/>
            <person name="Hu P.-C."/>
            <person name="Lucier T.S."/>
            <person name="Peterson S.N."/>
            <person name="Smith H.O."/>
            <person name="Hutchison C.A. III"/>
            <person name="Venter J.C."/>
        </authorList>
    </citation>
    <scope>NUCLEOTIDE SEQUENCE [LARGE SCALE GENOMIC DNA]</scope>
    <source>
        <strain>ATCC 33530 / DSM 19775 / NCTC 10195 / G37</strain>
    </source>
</reference>
<reference key="2">
    <citation type="submission" date="1998-10" db="EMBL/GenBank/DDBJ databases">
        <authorList>
            <person name="Fraser C.M."/>
            <person name="Gocayne J.D."/>
            <person name="White O."/>
            <person name="Adams M.D."/>
            <person name="Clayton R.A."/>
            <person name="Fleischmann R.D."/>
            <person name="Bult C.J."/>
            <person name="Kerlavage A.R."/>
            <person name="Sutton G.G."/>
            <person name="Kelley J.M."/>
            <person name="Fritchman J.L."/>
            <person name="Weidman J.F."/>
            <person name="Small K.V."/>
            <person name="Sandusky M."/>
            <person name="Fuhrmann J.L."/>
            <person name="Nguyen D.T."/>
            <person name="Utterback T.R."/>
            <person name="Saudek D.M."/>
            <person name="Phillips C.A."/>
            <person name="Merrick J.M."/>
            <person name="Tomb J.-F."/>
            <person name="Dougherty B.A."/>
            <person name="Bott K.F."/>
            <person name="Hu P.-C."/>
            <person name="Lucier T.S."/>
            <person name="Peterson S.N."/>
            <person name="Smith H.O."/>
            <person name="Hutchison C.A. III"/>
            <person name="Venter J.C."/>
        </authorList>
    </citation>
    <scope>IDENTIFICATION</scope>
</reference>
<name>Y350A_MYCGE</name>
<proteinExistence type="predicted"/>
<organism>
    <name type="scientific">Mycoplasma genitalium (strain ATCC 33530 / DSM 19775 / NCTC 10195 / G37)</name>
    <name type="common">Mycoplasmoides genitalium</name>
    <dbReference type="NCBI Taxonomy" id="243273"/>
    <lineage>
        <taxon>Bacteria</taxon>
        <taxon>Bacillati</taxon>
        <taxon>Mycoplasmatota</taxon>
        <taxon>Mycoplasmoidales</taxon>
        <taxon>Mycoplasmoidaceae</taxon>
        <taxon>Mycoplasmoides</taxon>
    </lineage>
</organism>
<evidence type="ECO:0000255" key="1"/>
<evidence type="ECO:0000305" key="2"/>
<comment type="subcellular location">
    <subcellularLocation>
        <location evidence="2">Cell membrane</location>
        <topology evidence="2">Multi-pass membrane protein</topology>
    </subcellularLocation>
</comment>
<sequence length="224" mass="26024">MNGNKLVFLPKKSYHQLFNITFSAMMLALAIITSLISEFISIPFFSQLKLTFDISVVFLVACAFFVSLGWSLTITLASALTSFFWNTNNVIGVLTVTLANLSTILFTRLYFCLFSKRRFCWIFVFLFTTLSNALLLTTLNGILITPLFWYYFGYVQTPNFLIVAEQYNKNTDFHFFFFGINNYWLGIFCLYSFFNLVKFGLVSCFGVPIMRSFQKFYWKRALAK</sequence>
<gene>
    <name type="ordered locus">MG350.1</name>
</gene>
<protein>
    <recommendedName>
        <fullName>Uncharacterized protein MG350.1</fullName>
    </recommendedName>
</protein>
<dbReference type="EMBL" id="L43967">
    <property type="protein sequence ID" value="AAC71586.1"/>
    <property type="molecule type" value="Genomic_DNA"/>
</dbReference>
<dbReference type="RefSeq" id="WP_009885808.1">
    <property type="nucleotide sequence ID" value="NC_000908.2"/>
</dbReference>
<dbReference type="SMR" id="Q9ZB72"/>
<dbReference type="STRING" id="243273.MG_521"/>
<dbReference type="GeneID" id="88282531"/>
<dbReference type="KEGG" id="mge:MG_521"/>
<dbReference type="eggNOG" id="ENOG50343JE">
    <property type="taxonomic scope" value="Bacteria"/>
</dbReference>
<dbReference type="HOGENOM" id="CLU_1228796_0_0_14"/>
<dbReference type="InParanoid" id="Q9ZB72"/>
<dbReference type="OrthoDB" id="401040at2"/>
<dbReference type="BioCyc" id="MGEN243273:G1GJ2-441-MONOMER"/>
<dbReference type="Proteomes" id="UP000000807">
    <property type="component" value="Chromosome"/>
</dbReference>
<dbReference type="GO" id="GO:0005886">
    <property type="term" value="C:plasma membrane"/>
    <property type="evidence" value="ECO:0007669"/>
    <property type="project" value="UniProtKB-SubCell"/>
</dbReference>
<dbReference type="Gene3D" id="1.10.1760.20">
    <property type="match status" value="1"/>
</dbReference>
<dbReference type="NCBIfam" id="NF046054">
    <property type="entry name" value="memb_MPN527"/>
    <property type="match status" value="1"/>
</dbReference>
<accession>Q9ZB72</accession>